<evidence type="ECO:0000255" key="1">
    <source>
        <dbReference type="HAMAP-Rule" id="MF_00274"/>
    </source>
</evidence>
<name>Y128_LACLM</name>
<organism>
    <name type="scientific">Lactococcus lactis subsp. cremoris (strain MG1363)</name>
    <dbReference type="NCBI Taxonomy" id="416870"/>
    <lineage>
        <taxon>Bacteria</taxon>
        <taxon>Bacillati</taxon>
        <taxon>Bacillota</taxon>
        <taxon>Bacilli</taxon>
        <taxon>Lactobacillales</taxon>
        <taxon>Streptococcaceae</taxon>
        <taxon>Lactococcus</taxon>
        <taxon>Lactococcus cremoris subsp. cremoris</taxon>
    </lineage>
</organism>
<gene>
    <name type="ordered locus">llmg_0128</name>
</gene>
<accession>A2RHJ9</accession>
<feature type="chain" id="PRO_1000003757" description="Nucleoid-associated protein llmg_0128">
    <location>
        <begin position="1"/>
        <end position="99"/>
    </location>
</feature>
<protein>
    <recommendedName>
        <fullName evidence="1">Nucleoid-associated protein llmg_0128</fullName>
    </recommendedName>
</protein>
<keyword id="KW-0963">Cytoplasm</keyword>
<keyword id="KW-0238">DNA-binding</keyword>
<reference key="1">
    <citation type="journal article" date="2007" name="J. Bacteriol.">
        <title>The complete genome sequence of the lactic acid bacterial paradigm Lactococcus lactis subsp. cremoris MG1363.</title>
        <authorList>
            <person name="Wegmann U."/>
            <person name="O'Connell-Motherway M."/>
            <person name="Zomer A."/>
            <person name="Buist G."/>
            <person name="Shearman C."/>
            <person name="Canchaya C."/>
            <person name="Ventura M."/>
            <person name="Goesmann A."/>
            <person name="Gasson M.J."/>
            <person name="Kuipers O.P."/>
            <person name="van Sinderen D."/>
            <person name="Kok J."/>
        </authorList>
    </citation>
    <scope>NUCLEOTIDE SEQUENCE [LARGE SCALE GENOMIC DNA]</scope>
    <source>
        <strain>MG1363</strain>
    </source>
</reference>
<sequence length="99" mass="11094">MMNMQSMMKQAQKLQKQMQVSQEEIANTTFVGKSAQDLVTVEFSGDRTLKSLNINPDVIDPEDPETLQDMVTDAVNDALSQIEKVTEQKLGKFTKGLPF</sequence>
<dbReference type="EMBL" id="AM406671">
    <property type="protein sequence ID" value="CAL96735.1"/>
    <property type="molecule type" value="Genomic_DNA"/>
</dbReference>
<dbReference type="RefSeq" id="WP_011675168.1">
    <property type="nucleotide sequence ID" value="NC_009004.1"/>
</dbReference>
<dbReference type="SMR" id="A2RHJ9"/>
<dbReference type="STRING" id="416870.llmg_0128"/>
<dbReference type="GeneID" id="61108427"/>
<dbReference type="KEGG" id="llm:llmg_0128"/>
<dbReference type="eggNOG" id="COG0718">
    <property type="taxonomic scope" value="Bacteria"/>
</dbReference>
<dbReference type="HOGENOM" id="CLU_140930_1_1_9"/>
<dbReference type="OrthoDB" id="9795263at2"/>
<dbReference type="PhylomeDB" id="A2RHJ9"/>
<dbReference type="Proteomes" id="UP000000364">
    <property type="component" value="Chromosome"/>
</dbReference>
<dbReference type="GO" id="GO:0043590">
    <property type="term" value="C:bacterial nucleoid"/>
    <property type="evidence" value="ECO:0007669"/>
    <property type="project" value="UniProtKB-UniRule"/>
</dbReference>
<dbReference type="GO" id="GO:0005829">
    <property type="term" value="C:cytosol"/>
    <property type="evidence" value="ECO:0007669"/>
    <property type="project" value="TreeGrafter"/>
</dbReference>
<dbReference type="GO" id="GO:0003677">
    <property type="term" value="F:DNA binding"/>
    <property type="evidence" value="ECO:0007669"/>
    <property type="project" value="UniProtKB-UniRule"/>
</dbReference>
<dbReference type="Gene3D" id="3.30.1310.10">
    <property type="entry name" value="Nucleoid-associated protein YbaB-like domain"/>
    <property type="match status" value="1"/>
</dbReference>
<dbReference type="HAMAP" id="MF_00274">
    <property type="entry name" value="DNA_YbaB_EbfC"/>
    <property type="match status" value="1"/>
</dbReference>
<dbReference type="InterPro" id="IPR036894">
    <property type="entry name" value="YbaB-like_sf"/>
</dbReference>
<dbReference type="InterPro" id="IPR004401">
    <property type="entry name" value="YbaB/EbfC"/>
</dbReference>
<dbReference type="NCBIfam" id="TIGR00103">
    <property type="entry name" value="DNA_YbaB_EbfC"/>
    <property type="match status" value="1"/>
</dbReference>
<dbReference type="PANTHER" id="PTHR33449">
    <property type="entry name" value="NUCLEOID-ASSOCIATED PROTEIN YBAB"/>
    <property type="match status" value="1"/>
</dbReference>
<dbReference type="PANTHER" id="PTHR33449:SF1">
    <property type="entry name" value="NUCLEOID-ASSOCIATED PROTEIN YBAB"/>
    <property type="match status" value="1"/>
</dbReference>
<dbReference type="Pfam" id="PF02575">
    <property type="entry name" value="YbaB_DNA_bd"/>
    <property type="match status" value="1"/>
</dbReference>
<dbReference type="PIRSF" id="PIRSF004555">
    <property type="entry name" value="UCP004555"/>
    <property type="match status" value="1"/>
</dbReference>
<dbReference type="SUPFAM" id="SSF82607">
    <property type="entry name" value="YbaB-like"/>
    <property type="match status" value="1"/>
</dbReference>
<comment type="function">
    <text evidence="1">Binds to DNA and alters its conformation. May be involved in regulation of gene expression, nucleoid organization and DNA protection.</text>
</comment>
<comment type="subunit">
    <text evidence="1">Homodimer.</text>
</comment>
<comment type="subcellular location">
    <subcellularLocation>
        <location evidence="1">Cytoplasm</location>
        <location evidence="1">Nucleoid</location>
    </subcellularLocation>
</comment>
<comment type="similarity">
    <text evidence="1">Belongs to the YbaB/EbfC family.</text>
</comment>
<proteinExistence type="inferred from homology"/>